<proteinExistence type="inferred from homology"/>
<gene>
    <name evidence="1" type="primary">tal</name>
    <name type="ordered locus">sce0029</name>
</gene>
<dbReference type="EC" id="2.2.1.2" evidence="1"/>
<dbReference type="EMBL" id="AM746676">
    <property type="protein sequence ID" value="CAN90185.1"/>
    <property type="molecule type" value="Genomic_DNA"/>
</dbReference>
<dbReference type="RefSeq" id="WP_012232663.1">
    <property type="nucleotide sequence ID" value="NC_010162.1"/>
</dbReference>
<dbReference type="SMR" id="A9GI16"/>
<dbReference type="STRING" id="448385.sce0029"/>
<dbReference type="KEGG" id="scl:sce0029"/>
<dbReference type="eggNOG" id="COG0176">
    <property type="taxonomic scope" value="Bacteria"/>
</dbReference>
<dbReference type="HOGENOM" id="CLU_079764_0_0_7"/>
<dbReference type="OrthoDB" id="9807051at2"/>
<dbReference type="BioCyc" id="SCEL448385:SCE_RS00145-MONOMER"/>
<dbReference type="UniPathway" id="UPA00115">
    <property type="reaction ID" value="UER00414"/>
</dbReference>
<dbReference type="Proteomes" id="UP000002139">
    <property type="component" value="Chromosome"/>
</dbReference>
<dbReference type="GO" id="GO:0005737">
    <property type="term" value="C:cytoplasm"/>
    <property type="evidence" value="ECO:0007669"/>
    <property type="project" value="UniProtKB-SubCell"/>
</dbReference>
<dbReference type="GO" id="GO:0016832">
    <property type="term" value="F:aldehyde-lyase activity"/>
    <property type="evidence" value="ECO:0007669"/>
    <property type="project" value="InterPro"/>
</dbReference>
<dbReference type="GO" id="GO:0004801">
    <property type="term" value="F:transaldolase activity"/>
    <property type="evidence" value="ECO:0007669"/>
    <property type="project" value="UniProtKB-UniRule"/>
</dbReference>
<dbReference type="GO" id="GO:0005975">
    <property type="term" value="P:carbohydrate metabolic process"/>
    <property type="evidence" value="ECO:0007669"/>
    <property type="project" value="InterPro"/>
</dbReference>
<dbReference type="GO" id="GO:0006098">
    <property type="term" value="P:pentose-phosphate shunt"/>
    <property type="evidence" value="ECO:0007669"/>
    <property type="project" value="UniProtKB-UniRule"/>
</dbReference>
<dbReference type="CDD" id="cd00956">
    <property type="entry name" value="Transaldolase_FSA"/>
    <property type="match status" value="1"/>
</dbReference>
<dbReference type="FunFam" id="3.20.20.70:FF:000018">
    <property type="entry name" value="Probable transaldolase"/>
    <property type="match status" value="1"/>
</dbReference>
<dbReference type="Gene3D" id="3.20.20.70">
    <property type="entry name" value="Aldolase class I"/>
    <property type="match status" value="1"/>
</dbReference>
<dbReference type="HAMAP" id="MF_00494">
    <property type="entry name" value="Transaldolase_3b"/>
    <property type="match status" value="1"/>
</dbReference>
<dbReference type="InterPro" id="IPR013785">
    <property type="entry name" value="Aldolase_TIM"/>
</dbReference>
<dbReference type="InterPro" id="IPR001585">
    <property type="entry name" value="TAL/FSA"/>
</dbReference>
<dbReference type="InterPro" id="IPR022999">
    <property type="entry name" value="Transaldolase_3B"/>
</dbReference>
<dbReference type="InterPro" id="IPR004731">
    <property type="entry name" value="Transaldolase_3B/F6P_aldolase"/>
</dbReference>
<dbReference type="InterPro" id="IPR018225">
    <property type="entry name" value="Transaldolase_AS"/>
</dbReference>
<dbReference type="InterPro" id="IPR033919">
    <property type="entry name" value="TSA/FSA_arc/bac"/>
</dbReference>
<dbReference type="NCBIfam" id="TIGR00875">
    <property type="entry name" value="fsa_talC_mipB"/>
    <property type="match status" value="1"/>
</dbReference>
<dbReference type="PANTHER" id="PTHR10683:SF40">
    <property type="entry name" value="FRUCTOSE-6-PHOSPHATE ALDOLASE 1-RELATED"/>
    <property type="match status" value="1"/>
</dbReference>
<dbReference type="PANTHER" id="PTHR10683">
    <property type="entry name" value="TRANSALDOLASE"/>
    <property type="match status" value="1"/>
</dbReference>
<dbReference type="Pfam" id="PF00923">
    <property type="entry name" value="TAL_FSA"/>
    <property type="match status" value="1"/>
</dbReference>
<dbReference type="SUPFAM" id="SSF51569">
    <property type="entry name" value="Aldolase"/>
    <property type="match status" value="1"/>
</dbReference>
<dbReference type="PROSITE" id="PS01054">
    <property type="entry name" value="TRANSALDOLASE_1"/>
    <property type="match status" value="1"/>
</dbReference>
<reference key="1">
    <citation type="journal article" date="2007" name="Nat. Biotechnol.">
        <title>Complete genome sequence of the myxobacterium Sorangium cellulosum.</title>
        <authorList>
            <person name="Schneiker S."/>
            <person name="Perlova O."/>
            <person name="Kaiser O."/>
            <person name="Gerth K."/>
            <person name="Alici A."/>
            <person name="Altmeyer M.O."/>
            <person name="Bartels D."/>
            <person name="Bekel T."/>
            <person name="Beyer S."/>
            <person name="Bode E."/>
            <person name="Bode H.B."/>
            <person name="Bolten C.J."/>
            <person name="Choudhuri J.V."/>
            <person name="Doss S."/>
            <person name="Elnakady Y.A."/>
            <person name="Frank B."/>
            <person name="Gaigalat L."/>
            <person name="Goesmann A."/>
            <person name="Groeger C."/>
            <person name="Gross F."/>
            <person name="Jelsbak L."/>
            <person name="Jelsbak L."/>
            <person name="Kalinowski J."/>
            <person name="Kegler C."/>
            <person name="Knauber T."/>
            <person name="Konietzny S."/>
            <person name="Kopp M."/>
            <person name="Krause L."/>
            <person name="Krug D."/>
            <person name="Linke B."/>
            <person name="Mahmud T."/>
            <person name="Martinez-Arias R."/>
            <person name="McHardy A.C."/>
            <person name="Merai M."/>
            <person name="Meyer F."/>
            <person name="Mormann S."/>
            <person name="Munoz-Dorado J."/>
            <person name="Perez J."/>
            <person name="Pradella S."/>
            <person name="Rachid S."/>
            <person name="Raddatz G."/>
            <person name="Rosenau F."/>
            <person name="Rueckert C."/>
            <person name="Sasse F."/>
            <person name="Scharfe M."/>
            <person name="Schuster S.C."/>
            <person name="Suen G."/>
            <person name="Treuner-Lange A."/>
            <person name="Velicer G.J."/>
            <person name="Vorholter F.-J."/>
            <person name="Weissman K.J."/>
            <person name="Welch R.D."/>
            <person name="Wenzel S.C."/>
            <person name="Whitworth D.E."/>
            <person name="Wilhelm S."/>
            <person name="Wittmann C."/>
            <person name="Bloecker H."/>
            <person name="Puehler A."/>
            <person name="Mueller R."/>
        </authorList>
    </citation>
    <scope>NUCLEOTIDE SEQUENCE [LARGE SCALE GENOMIC DNA]</scope>
    <source>
        <strain>So ce56</strain>
    </source>
</reference>
<protein>
    <recommendedName>
        <fullName evidence="1">Probable transaldolase</fullName>
        <ecNumber evidence="1">2.2.1.2</ecNumber>
    </recommendedName>
</protein>
<keyword id="KW-0963">Cytoplasm</keyword>
<keyword id="KW-0570">Pentose shunt</keyword>
<keyword id="KW-1185">Reference proteome</keyword>
<keyword id="KW-0704">Schiff base</keyword>
<keyword id="KW-0808">Transferase</keyword>
<comment type="function">
    <text evidence="1">Transaldolase is important for the balance of metabolites in the pentose-phosphate pathway.</text>
</comment>
<comment type="catalytic activity">
    <reaction evidence="1">
        <text>D-sedoheptulose 7-phosphate + D-glyceraldehyde 3-phosphate = D-erythrose 4-phosphate + beta-D-fructose 6-phosphate</text>
        <dbReference type="Rhea" id="RHEA:17053"/>
        <dbReference type="ChEBI" id="CHEBI:16897"/>
        <dbReference type="ChEBI" id="CHEBI:57483"/>
        <dbReference type="ChEBI" id="CHEBI:57634"/>
        <dbReference type="ChEBI" id="CHEBI:59776"/>
        <dbReference type="EC" id="2.2.1.2"/>
    </reaction>
</comment>
<comment type="pathway">
    <text evidence="1">Carbohydrate degradation; pentose phosphate pathway; D-glyceraldehyde 3-phosphate and beta-D-fructose 6-phosphate from D-ribose 5-phosphate and D-xylulose 5-phosphate (non-oxidative stage): step 2/3.</text>
</comment>
<comment type="subcellular location">
    <subcellularLocation>
        <location evidence="1">Cytoplasm</location>
    </subcellularLocation>
</comment>
<comment type="similarity">
    <text evidence="1">Belongs to the transaldolase family. Type 3B subfamily.</text>
</comment>
<feature type="chain" id="PRO_1000126356" description="Probable transaldolase">
    <location>
        <begin position="1"/>
        <end position="216"/>
    </location>
</feature>
<feature type="active site" description="Schiff-base intermediate with substrate" evidence="1">
    <location>
        <position position="83"/>
    </location>
</feature>
<name>TAL_SORC5</name>
<organism>
    <name type="scientific">Sorangium cellulosum (strain So ce56)</name>
    <name type="common">Polyangium cellulosum (strain So ce56)</name>
    <dbReference type="NCBI Taxonomy" id="448385"/>
    <lineage>
        <taxon>Bacteria</taxon>
        <taxon>Pseudomonadati</taxon>
        <taxon>Myxococcota</taxon>
        <taxon>Polyangia</taxon>
        <taxon>Polyangiales</taxon>
        <taxon>Polyangiaceae</taxon>
        <taxon>Sorangium</taxon>
    </lineage>
</organism>
<accession>A9GI16</accession>
<sequence>MKVFIDSGDIAEIKEAQSMGVVDGVTTNPSLLAKAGKPTKRAIAEICEVVDGPVSAEVVAVEKDAILREGRELAKIHRNVVVKVPLIDEGLKAARIFASEGIKTNVTLCFSAAQALLAAKAGATYVSPFVGRVDDAAGDGMDLVLQVVTIFRNYGFSTQVLTASIRHPVHFVQAAMIGSHAATMPLKVIKQLTRHPLTDVGLAQFLADAKKIPELV</sequence>
<evidence type="ECO:0000255" key="1">
    <source>
        <dbReference type="HAMAP-Rule" id="MF_00494"/>
    </source>
</evidence>